<accession>Q87T20</accession>
<sequence length="183" mass="19583">MTTIVSVRRNNKVVIAGDGQVSLGNTVMKGNARKVRRLYNNKVLAGFAGGTADAFTLFERFESKLQMHQGHLTKAAVELAKDWRSDRALRKLEALLAVADETASLIITGNGDVVQPENDLIAIGSGGAYAQAAATALLENTDLDAREIAEKALNIAGDICVFTNHHHTVEELDSTTEPETPAA</sequence>
<keyword id="KW-0021">Allosteric enzyme</keyword>
<keyword id="KW-0963">Cytoplasm</keyword>
<keyword id="KW-0378">Hydrolase</keyword>
<keyword id="KW-0479">Metal-binding</keyword>
<keyword id="KW-0645">Protease</keyword>
<keyword id="KW-0915">Sodium</keyword>
<keyword id="KW-0888">Threonine protease</keyword>
<proteinExistence type="inferred from homology"/>
<protein>
    <recommendedName>
        <fullName evidence="2">ATP-dependent protease subunit HslV</fullName>
        <ecNumber evidence="2">3.4.25.2</ecNumber>
    </recommendedName>
</protein>
<name>HSLV_VIBPA</name>
<dbReference type="EC" id="3.4.25.2" evidence="2"/>
<dbReference type="EMBL" id="BA000031">
    <property type="protein sequence ID" value="BAC58513.1"/>
    <property type="molecule type" value="Genomic_DNA"/>
</dbReference>
<dbReference type="RefSeq" id="NP_796629.1">
    <property type="nucleotide sequence ID" value="NC_004603.1"/>
</dbReference>
<dbReference type="RefSeq" id="WP_005455873.1">
    <property type="nucleotide sequence ID" value="NC_004603.1"/>
</dbReference>
<dbReference type="SMR" id="Q87T20"/>
<dbReference type="MEROPS" id="T01.006"/>
<dbReference type="GeneID" id="1187717"/>
<dbReference type="KEGG" id="vpa:VP0250"/>
<dbReference type="PATRIC" id="fig|223926.6.peg.242"/>
<dbReference type="eggNOG" id="COG5405">
    <property type="taxonomic scope" value="Bacteria"/>
</dbReference>
<dbReference type="HOGENOM" id="CLU_093872_1_0_6"/>
<dbReference type="Proteomes" id="UP000002493">
    <property type="component" value="Chromosome 1"/>
</dbReference>
<dbReference type="GO" id="GO:0009376">
    <property type="term" value="C:HslUV protease complex"/>
    <property type="evidence" value="ECO:0007669"/>
    <property type="project" value="UniProtKB-UniRule"/>
</dbReference>
<dbReference type="GO" id="GO:0005839">
    <property type="term" value="C:proteasome core complex"/>
    <property type="evidence" value="ECO:0007669"/>
    <property type="project" value="InterPro"/>
</dbReference>
<dbReference type="GO" id="GO:0046872">
    <property type="term" value="F:metal ion binding"/>
    <property type="evidence" value="ECO:0007669"/>
    <property type="project" value="UniProtKB-KW"/>
</dbReference>
<dbReference type="GO" id="GO:0004298">
    <property type="term" value="F:threonine-type endopeptidase activity"/>
    <property type="evidence" value="ECO:0007669"/>
    <property type="project" value="UniProtKB-KW"/>
</dbReference>
<dbReference type="GO" id="GO:0051603">
    <property type="term" value="P:proteolysis involved in protein catabolic process"/>
    <property type="evidence" value="ECO:0007669"/>
    <property type="project" value="InterPro"/>
</dbReference>
<dbReference type="CDD" id="cd01913">
    <property type="entry name" value="protease_HslV"/>
    <property type="match status" value="1"/>
</dbReference>
<dbReference type="FunFam" id="3.60.20.10:FF:000002">
    <property type="entry name" value="ATP-dependent protease subunit HslV"/>
    <property type="match status" value="1"/>
</dbReference>
<dbReference type="Gene3D" id="3.60.20.10">
    <property type="entry name" value="Glutamine Phosphoribosylpyrophosphate, subunit 1, domain 1"/>
    <property type="match status" value="1"/>
</dbReference>
<dbReference type="HAMAP" id="MF_00248">
    <property type="entry name" value="HslV"/>
    <property type="match status" value="1"/>
</dbReference>
<dbReference type="InterPro" id="IPR022281">
    <property type="entry name" value="ATP-dep_Prtase_HsIV_su"/>
</dbReference>
<dbReference type="InterPro" id="IPR029055">
    <property type="entry name" value="Ntn_hydrolases_N"/>
</dbReference>
<dbReference type="InterPro" id="IPR001353">
    <property type="entry name" value="Proteasome_sua/b"/>
</dbReference>
<dbReference type="InterPro" id="IPR023333">
    <property type="entry name" value="Proteasome_suB-type"/>
</dbReference>
<dbReference type="NCBIfam" id="TIGR03692">
    <property type="entry name" value="ATP_dep_HslV"/>
    <property type="match status" value="1"/>
</dbReference>
<dbReference type="NCBIfam" id="NF003964">
    <property type="entry name" value="PRK05456.1"/>
    <property type="match status" value="1"/>
</dbReference>
<dbReference type="PANTHER" id="PTHR32194:SF0">
    <property type="entry name" value="ATP-DEPENDENT PROTEASE SUBUNIT HSLV"/>
    <property type="match status" value="1"/>
</dbReference>
<dbReference type="PANTHER" id="PTHR32194">
    <property type="entry name" value="METALLOPROTEASE TLDD"/>
    <property type="match status" value="1"/>
</dbReference>
<dbReference type="Pfam" id="PF00227">
    <property type="entry name" value="Proteasome"/>
    <property type="match status" value="1"/>
</dbReference>
<dbReference type="PIRSF" id="PIRSF039093">
    <property type="entry name" value="HslV"/>
    <property type="match status" value="1"/>
</dbReference>
<dbReference type="SUPFAM" id="SSF56235">
    <property type="entry name" value="N-terminal nucleophile aminohydrolases (Ntn hydrolases)"/>
    <property type="match status" value="1"/>
</dbReference>
<dbReference type="PROSITE" id="PS51476">
    <property type="entry name" value="PROTEASOME_BETA_2"/>
    <property type="match status" value="1"/>
</dbReference>
<organism>
    <name type="scientific">Vibrio parahaemolyticus serotype O3:K6 (strain RIMD 2210633)</name>
    <dbReference type="NCBI Taxonomy" id="223926"/>
    <lineage>
        <taxon>Bacteria</taxon>
        <taxon>Pseudomonadati</taxon>
        <taxon>Pseudomonadota</taxon>
        <taxon>Gammaproteobacteria</taxon>
        <taxon>Vibrionales</taxon>
        <taxon>Vibrionaceae</taxon>
        <taxon>Vibrio</taxon>
    </lineage>
</organism>
<gene>
    <name evidence="2" type="primary">hslV</name>
    <name type="ordered locus">VP0250</name>
</gene>
<evidence type="ECO:0000250" key="1"/>
<evidence type="ECO:0000255" key="2">
    <source>
        <dbReference type="HAMAP-Rule" id="MF_00248"/>
    </source>
</evidence>
<reference key="1">
    <citation type="journal article" date="2003" name="Lancet">
        <title>Genome sequence of Vibrio parahaemolyticus: a pathogenic mechanism distinct from that of V. cholerae.</title>
        <authorList>
            <person name="Makino K."/>
            <person name="Oshima K."/>
            <person name="Kurokawa K."/>
            <person name="Yokoyama K."/>
            <person name="Uda T."/>
            <person name="Tagomori K."/>
            <person name="Iijima Y."/>
            <person name="Najima M."/>
            <person name="Nakano M."/>
            <person name="Yamashita A."/>
            <person name="Kubota Y."/>
            <person name="Kimura S."/>
            <person name="Yasunaga T."/>
            <person name="Honda T."/>
            <person name="Shinagawa H."/>
            <person name="Hattori M."/>
            <person name="Iida T."/>
        </authorList>
    </citation>
    <scope>NUCLEOTIDE SEQUENCE [LARGE SCALE GENOMIC DNA]</scope>
    <source>
        <strain>RIMD 2210633</strain>
    </source>
</reference>
<comment type="function">
    <text evidence="2">Protease subunit of a proteasome-like degradation complex believed to be a general protein degrading machinery.</text>
</comment>
<comment type="catalytic activity">
    <reaction evidence="2">
        <text>ATP-dependent cleavage of peptide bonds with broad specificity.</text>
        <dbReference type="EC" id="3.4.25.2"/>
    </reaction>
</comment>
<comment type="activity regulation">
    <text evidence="2">Allosterically activated by HslU binding.</text>
</comment>
<comment type="subunit">
    <text evidence="2">A double ring-shaped homohexamer of HslV is capped on each side by a ring-shaped HslU homohexamer. The assembly of the HslU/HslV complex is dependent on binding of ATP.</text>
</comment>
<comment type="subcellular location">
    <subcellularLocation>
        <location evidence="2">Cytoplasm</location>
    </subcellularLocation>
</comment>
<comment type="similarity">
    <text evidence="2">Belongs to the peptidase T1B family. HslV subfamily.</text>
</comment>
<feature type="initiator methionine" description="Removed" evidence="1">
    <location>
        <position position="1"/>
    </location>
</feature>
<feature type="chain" id="PRO_0000148158" description="ATP-dependent protease subunit HslV">
    <location>
        <begin position="2"/>
        <end position="183"/>
    </location>
</feature>
<feature type="active site" evidence="2">
    <location>
        <position position="2"/>
    </location>
</feature>
<feature type="binding site" evidence="2">
    <location>
        <position position="157"/>
    </location>
    <ligand>
        <name>Na(+)</name>
        <dbReference type="ChEBI" id="CHEBI:29101"/>
    </ligand>
</feature>
<feature type="binding site" evidence="2">
    <location>
        <position position="160"/>
    </location>
    <ligand>
        <name>Na(+)</name>
        <dbReference type="ChEBI" id="CHEBI:29101"/>
    </ligand>
</feature>
<feature type="binding site" evidence="2">
    <location>
        <position position="163"/>
    </location>
    <ligand>
        <name>Na(+)</name>
        <dbReference type="ChEBI" id="CHEBI:29101"/>
    </ligand>
</feature>